<evidence type="ECO:0000255" key="1">
    <source>
        <dbReference type="HAMAP-Rule" id="MF_00387"/>
    </source>
</evidence>
<organism>
    <name type="scientific">Pseudomonas syringae pv. syringae (strain B728a)</name>
    <dbReference type="NCBI Taxonomy" id="205918"/>
    <lineage>
        <taxon>Bacteria</taxon>
        <taxon>Pseudomonadati</taxon>
        <taxon>Pseudomonadota</taxon>
        <taxon>Gammaproteobacteria</taxon>
        <taxon>Pseudomonadales</taxon>
        <taxon>Pseudomonadaceae</taxon>
        <taxon>Pseudomonas</taxon>
        <taxon>Pseudomonas syringae</taxon>
    </lineage>
</organism>
<proteinExistence type="inferred from homology"/>
<feature type="chain" id="PRO_0000302591" description="Acyl-[acyl-carrier-protein]--UDP-N-acetylglucosamine O-acyltransferase">
    <location>
        <begin position="1"/>
        <end position="258"/>
    </location>
</feature>
<gene>
    <name evidence="1" type="primary">lpxA</name>
    <name type="ordered locus">Psyr_1355</name>
</gene>
<protein>
    <recommendedName>
        <fullName evidence="1">Acyl-[acyl-carrier-protein]--UDP-N-acetylglucosamine O-acyltransferase</fullName>
        <shortName evidence="1">UDP-N-acetylglucosamine acyltransferase</shortName>
        <ecNumber evidence="1">2.3.1.129</ecNumber>
    </recommendedName>
</protein>
<comment type="function">
    <text evidence="1">Involved in the biosynthesis of lipid A, a phosphorylated glycolipid that anchors the lipopolysaccharide to the outer membrane of the cell.</text>
</comment>
<comment type="catalytic activity">
    <reaction evidence="1">
        <text>a (3R)-hydroxyacyl-[ACP] + UDP-N-acetyl-alpha-D-glucosamine = a UDP-3-O-[(3R)-3-hydroxyacyl]-N-acetyl-alpha-D-glucosamine + holo-[ACP]</text>
        <dbReference type="Rhea" id="RHEA:67812"/>
        <dbReference type="Rhea" id="RHEA-COMP:9685"/>
        <dbReference type="Rhea" id="RHEA-COMP:9945"/>
        <dbReference type="ChEBI" id="CHEBI:57705"/>
        <dbReference type="ChEBI" id="CHEBI:64479"/>
        <dbReference type="ChEBI" id="CHEBI:78827"/>
        <dbReference type="ChEBI" id="CHEBI:173225"/>
        <dbReference type="EC" id="2.3.1.129"/>
    </reaction>
</comment>
<comment type="pathway">
    <text evidence="1">Glycolipid biosynthesis; lipid IV(A) biosynthesis; lipid IV(A) from (3R)-3-hydroxytetradecanoyl-[acyl-carrier-protein] and UDP-N-acetyl-alpha-D-glucosamine: step 1/6.</text>
</comment>
<comment type="subunit">
    <text evidence="1">Homotrimer.</text>
</comment>
<comment type="subcellular location">
    <subcellularLocation>
        <location evidence="1">Cytoplasm</location>
    </subcellularLocation>
</comment>
<comment type="similarity">
    <text evidence="1">Belongs to the transferase hexapeptide repeat family. LpxA subfamily.</text>
</comment>
<name>LPXA_PSEU2</name>
<accession>Q4ZWR6</accession>
<sequence length="258" mass="27937">MSLIDPRAIIDPTAVLADNVEVGPWSIIGPGVEIGEGTVVGPHVVLKGPTRIGKHNRIYQFSSVGEDTPDLKYKGEETRLVIGDHNVIREGVTIHRGTVQDRAETTLGDHNLIMAYAHIGHDSVIGNHVILVNNTALAGHVHVDDWAILSGFTLVHQFCHIGAHSFSGMGTAIGKDVPAFVTVFGNPAEARSMNFEGMRRRGFSEEAIHALRRAYKTVYRQGLTIGQALADLAEPAAQFPEVAVFLQSIQTSTRGIIR</sequence>
<dbReference type="EC" id="2.3.1.129" evidence="1"/>
<dbReference type="EMBL" id="CP000075">
    <property type="protein sequence ID" value="AAY36406.1"/>
    <property type="molecule type" value="Genomic_DNA"/>
</dbReference>
<dbReference type="RefSeq" id="WP_003314305.1">
    <property type="nucleotide sequence ID" value="NC_007005.1"/>
</dbReference>
<dbReference type="RefSeq" id="YP_234444.1">
    <property type="nucleotide sequence ID" value="NC_007005.1"/>
</dbReference>
<dbReference type="SMR" id="Q4ZWR6"/>
<dbReference type="STRING" id="205918.Psyr_1355"/>
<dbReference type="GeneID" id="77277311"/>
<dbReference type="KEGG" id="psb:Psyr_1355"/>
<dbReference type="PATRIC" id="fig|205918.7.peg.1388"/>
<dbReference type="eggNOG" id="COG1043">
    <property type="taxonomic scope" value="Bacteria"/>
</dbReference>
<dbReference type="HOGENOM" id="CLU_061249_0_0_6"/>
<dbReference type="OrthoDB" id="9807278at2"/>
<dbReference type="UniPathway" id="UPA00359">
    <property type="reaction ID" value="UER00477"/>
</dbReference>
<dbReference type="Proteomes" id="UP000000426">
    <property type="component" value="Chromosome"/>
</dbReference>
<dbReference type="GO" id="GO:0005737">
    <property type="term" value="C:cytoplasm"/>
    <property type="evidence" value="ECO:0007669"/>
    <property type="project" value="UniProtKB-SubCell"/>
</dbReference>
<dbReference type="GO" id="GO:0016020">
    <property type="term" value="C:membrane"/>
    <property type="evidence" value="ECO:0007669"/>
    <property type="project" value="GOC"/>
</dbReference>
<dbReference type="GO" id="GO:0008780">
    <property type="term" value="F:acyl-[acyl-carrier-protein]-UDP-N-acetylglucosamine O-acyltransferase activity"/>
    <property type="evidence" value="ECO:0007669"/>
    <property type="project" value="UniProtKB-UniRule"/>
</dbReference>
<dbReference type="GO" id="GO:0009245">
    <property type="term" value="P:lipid A biosynthetic process"/>
    <property type="evidence" value="ECO:0007669"/>
    <property type="project" value="UniProtKB-UniRule"/>
</dbReference>
<dbReference type="CDD" id="cd03351">
    <property type="entry name" value="LbH_UDP-GlcNAc_AT"/>
    <property type="match status" value="1"/>
</dbReference>
<dbReference type="FunFam" id="2.160.10.10:FF:000003">
    <property type="entry name" value="Acyl-[acyl-carrier-protein]--UDP-N-acetylglucosamine O-acyltransferase"/>
    <property type="match status" value="1"/>
</dbReference>
<dbReference type="Gene3D" id="2.160.10.10">
    <property type="entry name" value="Hexapeptide repeat proteins"/>
    <property type="match status" value="1"/>
</dbReference>
<dbReference type="Gene3D" id="1.20.1180.10">
    <property type="entry name" value="Udp N-acetylglucosamine O-acyltransferase, C-terminal domain"/>
    <property type="match status" value="1"/>
</dbReference>
<dbReference type="HAMAP" id="MF_00387">
    <property type="entry name" value="LpxA"/>
    <property type="match status" value="1"/>
</dbReference>
<dbReference type="InterPro" id="IPR029098">
    <property type="entry name" value="Acetyltransf_C"/>
</dbReference>
<dbReference type="InterPro" id="IPR037157">
    <property type="entry name" value="Acetyltransf_C_sf"/>
</dbReference>
<dbReference type="InterPro" id="IPR001451">
    <property type="entry name" value="Hexapep"/>
</dbReference>
<dbReference type="InterPro" id="IPR018357">
    <property type="entry name" value="Hexapep_transf_CS"/>
</dbReference>
<dbReference type="InterPro" id="IPR010137">
    <property type="entry name" value="Lipid_A_LpxA"/>
</dbReference>
<dbReference type="InterPro" id="IPR011004">
    <property type="entry name" value="Trimer_LpxA-like_sf"/>
</dbReference>
<dbReference type="NCBIfam" id="TIGR01852">
    <property type="entry name" value="lipid_A_lpxA"/>
    <property type="match status" value="1"/>
</dbReference>
<dbReference type="NCBIfam" id="NF003657">
    <property type="entry name" value="PRK05289.1"/>
    <property type="match status" value="1"/>
</dbReference>
<dbReference type="PANTHER" id="PTHR43480">
    <property type="entry name" value="ACYL-[ACYL-CARRIER-PROTEIN]--UDP-N-ACETYLGLUCOSAMINE O-ACYLTRANSFERASE"/>
    <property type="match status" value="1"/>
</dbReference>
<dbReference type="PANTHER" id="PTHR43480:SF1">
    <property type="entry name" value="ACYL-[ACYL-CARRIER-PROTEIN]--UDP-N-ACETYLGLUCOSAMINE O-ACYLTRANSFERASE, MITOCHONDRIAL-RELATED"/>
    <property type="match status" value="1"/>
</dbReference>
<dbReference type="Pfam" id="PF13720">
    <property type="entry name" value="Acetyltransf_11"/>
    <property type="match status" value="1"/>
</dbReference>
<dbReference type="Pfam" id="PF00132">
    <property type="entry name" value="Hexapep"/>
    <property type="match status" value="1"/>
</dbReference>
<dbReference type="PIRSF" id="PIRSF000456">
    <property type="entry name" value="UDP-GlcNAc_acltr"/>
    <property type="match status" value="1"/>
</dbReference>
<dbReference type="SUPFAM" id="SSF51161">
    <property type="entry name" value="Trimeric LpxA-like enzymes"/>
    <property type="match status" value="1"/>
</dbReference>
<dbReference type="PROSITE" id="PS00101">
    <property type="entry name" value="HEXAPEP_TRANSFERASES"/>
    <property type="match status" value="1"/>
</dbReference>
<reference key="1">
    <citation type="journal article" date="2005" name="Proc. Natl. Acad. Sci. U.S.A.">
        <title>Comparison of the complete genome sequences of Pseudomonas syringae pv. syringae B728a and pv. tomato DC3000.</title>
        <authorList>
            <person name="Feil H."/>
            <person name="Feil W.S."/>
            <person name="Chain P."/>
            <person name="Larimer F."/>
            <person name="Dibartolo G."/>
            <person name="Copeland A."/>
            <person name="Lykidis A."/>
            <person name="Trong S."/>
            <person name="Nolan M."/>
            <person name="Goltsman E."/>
            <person name="Thiel J."/>
            <person name="Malfatti S."/>
            <person name="Loper J.E."/>
            <person name="Lapidus A."/>
            <person name="Detter J.C."/>
            <person name="Land M."/>
            <person name="Richardson P.M."/>
            <person name="Kyrpides N.C."/>
            <person name="Ivanova N."/>
            <person name="Lindow S.E."/>
        </authorList>
    </citation>
    <scope>NUCLEOTIDE SEQUENCE [LARGE SCALE GENOMIC DNA]</scope>
    <source>
        <strain>B728a</strain>
    </source>
</reference>
<keyword id="KW-0012">Acyltransferase</keyword>
<keyword id="KW-0963">Cytoplasm</keyword>
<keyword id="KW-0441">Lipid A biosynthesis</keyword>
<keyword id="KW-0444">Lipid biosynthesis</keyword>
<keyword id="KW-0443">Lipid metabolism</keyword>
<keyword id="KW-0677">Repeat</keyword>
<keyword id="KW-0808">Transferase</keyword>